<proteinExistence type="evidence at protein level"/>
<organism>
    <name type="scientific">Rhodospirillum rubrum (strain ATCC 11170 / ATH 1.1.1 / DSM 467 / LMG 4362 / NCIMB 8255 / S1)</name>
    <dbReference type="NCBI Taxonomy" id="269796"/>
    <lineage>
        <taxon>Bacteria</taxon>
        <taxon>Pseudomonadati</taxon>
        <taxon>Pseudomonadota</taxon>
        <taxon>Alphaproteobacteria</taxon>
        <taxon>Rhodospirillales</taxon>
        <taxon>Rhodospirillaceae</taxon>
        <taxon>Rhodospirillum</taxon>
    </lineage>
</organism>
<gene>
    <name type="primary">pntAA</name>
    <name type="synonym">nntA1</name>
    <name type="ordered locus">Rru_A2183</name>
</gene>
<sequence>MKIAIPKERRPGEDRVAISPEVVKKLVGLGFEVIVEQGAGVGASITDDALTAAGATIASTAAQALSQADVVWKVQRPMTAEEGTDEVALIKEGAVLMCHLGALTNRPVVEALTKRKITAYAMELMPRISRAQSMDILSSQSNLAGYRAVIDGAYEFARAFPMMMTAAGTVPPARVLVFGVGVAGLQAIATAKRLGAVVMATDVRAATKEQVESLGGKFITVDDEAMKTAETAGGYAKEMGEEFRKKQAEAVLKELVKTDIAITTALIPGKPAPVLITEEMVTKMKPGSVIIDLAVEAGGNCPLSEPGKIVVKHGVKIVGHTNVPSRVAADASPLFAKNLLNFLTPHVDKDTKTLVMKLEDETVSGTCVTRDGAIVHPALTGQGA</sequence>
<dbReference type="EC" id="7.1.1.1" evidence="4 5 7 8"/>
<dbReference type="EMBL" id="U05294">
    <property type="protein sequence ID" value="AAA62493.1"/>
    <property type="molecule type" value="Genomic_DNA"/>
</dbReference>
<dbReference type="EMBL" id="CP000230">
    <property type="protein sequence ID" value="ABC22983.1"/>
    <property type="molecule type" value="Genomic_DNA"/>
</dbReference>
<dbReference type="RefSeq" id="WP_011390032.1">
    <property type="nucleotide sequence ID" value="NC_007643.1"/>
</dbReference>
<dbReference type="RefSeq" id="YP_427270.1">
    <property type="nucleotide sequence ID" value="NC_007643.1"/>
</dbReference>
<dbReference type="PDB" id="1F8G">
    <property type="method" value="X-ray"/>
    <property type="resolution" value="2.00 A"/>
    <property type="chains" value="A/B/C/D=1-384"/>
</dbReference>
<dbReference type="PDB" id="1HZZ">
    <property type="method" value="X-ray"/>
    <property type="resolution" value="2.50 A"/>
    <property type="chains" value="A/B=1-384"/>
</dbReference>
<dbReference type="PDB" id="1L7D">
    <property type="method" value="X-ray"/>
    <property type="resolution" value="1.81 A"/>
    <property type="chains" value="A/B/C/D=1-384"/>
</dbReference>
<dbReference type="PDB" id="1L7E">
    <property type="method" value="X-ray"/>
    <property type="resolution" value="1.90 A"/>
    <property type="chains" value="A/B/C/D=1-384"/>
</dbReference>
<dbReference type="PDB" id="1NM5">
    <property type="method" value="X-ray"/>
    <property type="resolution" value="2.40 A"/>
    <property type="chains" value="A/B=1-384"/>
</dbReference>
<dbReference type="PDB" id="1PTJ">
    <property type="method" value="X-ray"/>
    <property type="resolution" value="2.61 A"/>
    <property type="chains" value="A/B=1-381"/>
</dbReference>
<dbReference type="PDB" id="1U28">
    <property type="method" value="X-ray"/>
    <property type="resolution" value="2.30 A"/>
    <property type="chains" value="A/B=1-384"/>
</dbReference>
<dbReference type="PDB" id="1U2D">
    <property type="method" value="X-ray"/>
    <property type="resolution" value="3.00 A"/>
    <property type="chains" value="A/B=1-384"/>
</dbReference>
<dbReference type="PDB" id="1U2G">
    <property type="method" value="X-ray"/>
    <property type="resolution" value="2.20 A"/>
    <property type="chains" value="A/B=1-384"/>
</dbReference>
<dbReference type="PDB" id="1XLT">
    <property type="method" value="X-ray"/>
    <property type="resolution" value="3.10 A"/>
    <property type="chains" value="A/B/D/E/G/H=1-384"/>
</dbReference>
<dbReference type="PDB" id="2FR8">
    <property type="method" value="X-ray"/>
    <property type="resolution" value="2.60 A"/>
    <property type="chains" value="A/B=1-384"/>
</dbReference>
<dbReference type="PDB" id="2FRD">
    <property type="method" value="X-ray"/>
    <property type="resolution" value="3.20 A"/>
    <property type="chains" value="A/B=1-384"/>
</dbReference>
<dbReference type="PDB" id="2FSV">
    <property type="method" value="X-ray"/>
    <property type="resolution" value="2.30 A"/>
    <property type="chains" value="A/B=1-384"/>
</dbReference>
<dbReference type="PDB" id="2OO5">
    <property type="method" value="X-ray"/>
    <property type="resolution" value="2.60 A"/>
    <property type="chains" value="A/B=1-384"/>
</dbReference>
<dbReference type="PDB" id="2OOR">
    <property type="method" value="X-ray"/>
    <property type="resolution" value="2.32 A"/>
    <property type="chains" value="A/B=1-384"/>
</dbReference>
<dbReference type="PDBsum" id="1F8G"/>
<dbReference type="PDBsum" id="1HZZ"/>
<dbReference type="PDBsum" id="1L7D"/>
<dbReference type="PDBsum" id="1L7E"/>
<dbReference type="PDBsum" id="1NM5"/>
<dbReference type="PDBsum" id="1PTJ"/>
<dbReference type="PDBsum" id="1U28"/>
<dbReference type="PDBsum" id="1U2D"/>
<dbReference type="PDBsum" id="1U2G"/>
<dbReference type="PDBsum" id="1XLT"/>
<dbReference type="PDBsum" id="2FR8"/>
<dbReference type="PDBsum" id="2FRD"/>
<dbReference type="PDBsum" id="2FSV"/>
<dbReference type="PDBsum" id="2OO5"/>
<dbReference type="PDBsum" id="2OOR"/>
<dbReference type="SMR" id="Q2RSB2"/>
<dbReference type="STRING" id="269796.Rru_A2183"/>
<dbReference type="EnsemblBacteria" id="ABC22983">
    <property type="protein sequence ID" value="ABC22983"/>
    <property type="gene ID" value="Rru_A2183"/>
</dbReference>
<dbReference type="KEGG" id="rru:Rru_A2183"/>
<dbReference type="PATRIC" id="fig|269796.9.peg.2277"/>
<dbReference type="eggNOG" id="COG3288">
    <property type="taxonomic scope" value="Bacteria"/>
</dbReference>
<dbReference type="HOGENOM" id="CLU_003376_2_1_5"/>
<dbReference type="PhylomeDB" id="Q2RSB2"/>
<dbReference type="BRENDA" id="7.1.1.1">
    <property type="organism ID" value="5420"/>
</dbReference>
<dbReference type="EvolutionaryTrace" id="Q2RSB2"/>
<dbReference type="PRO" id="PR:Q2RSB2"/>
<dbReference type="Proteomes" id="UP000001929">
    <property type="component" value="Chromosome"/>
</dbReference>
<dbReference type="GO" id="GO:0005886">
    <property type="term" value="C:plasma membrane"/>
    <property type="evidence" value="ECO:0007669"/>
    <property type="project" value="TreeGrafter"/>
</dbReference>
<dbReference type="GO" id="GO:0051287">
    <property type="term" value="F:NAD binding"/>
    <property type="evidence" value="ECO:0000314"/>
    <property type="project" value="UniProtKB"/>
</dbReference>
<dbReference type="GO" id="GO:0003957">
    <property type="term" value="F:NAD(P)+ transhydrogenase (Si-specific) activity"/>
    <property type="evidence" value="ECO:0000314"/>
    <property type="project" value="CACAO"/>
</dbReference>
<dbReference type="GO" id="GO:0070403">
    <property type="term" value="F:NAD+ binding"/>
    <property type="evidence" value="ECO:0000314"/>
    <property type="project" value="UniProtKB"/>
</dbReference>
<dbReference type="GO" id="GO:0070404">
    <property type="term" value="F:NADH binding"/>
    <property type="evidence" value="ECO:0000314"/>
    <property type="project" value="UniProtKB"/>
</dbReference>
<dbReference type="GO" id="GO:0050661">
    <property type="term" value="F:NADP binding"/>
    <property type="evidence" value="ECO:0007669"/>
    <property type="project" value="TreeGrafter"/>
</dbReference>
<dbReference type="GO" id="GO:0046983">
    <property type="term" value="F:protein dimerization activity"/>
    <property type="evidence" value="ECO:0000314"/>
    <property type="project" value="UniProtKB"/>
</dbReference>
<dbReference type="GO" id="GO:0008750">
    <property type="term" value="F:proton-translocating NAD(P)+ transhydrogenase activity"/>
    <property type="evidence" value="ECO:0000314"/>
    <property type="project" value="UniProtKB"/>
</dbReference>
<dbReference type="GO" id="GO:0006740">
    <property type="term" value="P:NADPH regeneration"/>
    <property type="evidence" value="ECO:0000314"/>
    <property type="project" value="UniProtKB"/>
</dbReference>
<dbReference type="CDD" id="cd05304">
    <property type="entry name" value="Rubrum_tdh"/>
    <property type="match status" value="1"/>
</dbReference>
<dbReference type="FunFam" id="3.40.50.720:FF:000188">
    <property type="entry name" value="NAD(P) transhydrogenase alpha subunit 1"/>
    <property type="match status" value="1"/>
</dbReference>
<dbReference type="Gene3D" id="3.40.50.720">
    <property type="entry name" value="NAD(P)-binding Rossmann-like Domain"/>
    <property type="match status" value="2"/>
</dbReference>
<dbReference type="InterPro" id="IPR008143">
    <property type="entry name" value="Ala_DH/PNT_CS2"/>
</dbReference>
<dbReference type="InterPro" id="IPR008142">
    <property type="entry name" value="AlaDH/PNT_CS1"/>
</dbReference>
<dbReference type="InterPro" id="IPR007886">
    <property type="entry name" value="AlaDH/PNT_N"/>
</dbReference>
<dbReference type="InterPro" id="IPR007698">
    <property type="entry name" value="AlaDH/PNT_NAD(H)-bd"/>
</dbReference>
<dbReference type="InterPro" id="IPR036291">
    <property type="entry name" value="NAD(P)-bd_dom_sf"/>
</dbReference>
<dbReference type="NCBIfam" id="NF006942">
    <property type="entry name" value="PRK09424.1"/>
    <property type="match status" value="1"/>
</dbReference>
<dbReference type="PANTHER" id="PTHR10160">
    <property type="entry name" value="NAD(P) TRANSHYDROGENASE"/>
    <property type="match status" value="1"/>
</dbReference>
<dbReference type="PANTHER" id="PTHR10160:SF19">
    <property type="entry name" value="PROTON-TRANSLOCATING NAD(P)(+) TRANSHYDROGENASE"/>
    <property type="match status" value="1"/>
</dbReference>
<dbReference type="Pfam" id="PF01262">
    <property type="entry name" value="AlaDh_PNT_C"/>
    <property type="match status" value="1"/>
</dbReference>
<dbReference type="Pfam" id="PF05222">
    <property type="entry name" value="AlaDh_PNT_N"/>
    <property type="match status" value="1"/>
</dbReference>
<dbReference type="SMART" id="SM01002">
    <property type="entry name" value="AlaDh_PNT_C"/>
    <property type="match status" value="1"/>
</dbReference>
<dbReference type="SMART" id="SM01003">
    <property type="entry name" value="AlaDh_PNT_N"/>
    <property type="match status" value="1"/>
</dbReference>
<dbReference type="SUPFAM" id="SSF52283">
    <property type="entry name" value="Formate/glycerate dehydrogenase catalytic domain-like"/>
    <property type="match status" value="2"/>
</dbReference>
<dbReference type="SUPFAM" id="SSF51735">
    <property type="entry name" value="NAD(P)-binding Rossmann-fold domains"/>
    <property type="match status" value="1"/>
</dbReference>
<dbReference type="PROSITE" id="PS00836">
    <property type="entry name" value="ALADH_PNT_1"/>
    <property type="match status" value="1"/>
</dbReference>
<dbReference type="PROSITE" id="PS00837">
    <property type="entry name" value="ALADH_PNT_2"/>
    <property type="match status" value="1"/>
</dbReference>
<reference key="1">
    <citation type="journal article" date="1994" name="Microbiology">
        <title>Cloning and sequencing of the genes for the proton-translocating nicotinamide nucleotide transhydrogenase from Rhodospirillum rubrum and the implications for the domain structure of the enzyme.</title>
        <authorList>
            <person name="Williams R."/>
            <person name="Cotton N.P."/>
            <person name="Thomas C.M."/>
            <person name="Jackson J.B."/>
        </authorList>
    </citation>
    <scope>NUCLEOTIDE SEQUENCE [GENOMIC DNA]</scope>
</reference>
<reference key="2">
    <citation type="journal article" date="2011" name="Stand. Genomic Sci.">
        <title>Complete genome sequence of Rhodospirillum rubrum type strain (S1).</title>
        <authorList>
            <person name="Munk A.C."/>
            <person name="Copeland A."/>
            <person name="Lucas S."/>
            <person name="Lapidus A."/>
            <person name="Del Rio T.G."/>
            <person name="Barry K."/>
            <person name="Detter J.C."/>
            <person name="Hammon N."/>
            <person name="Israni S."/>
            <person name="Pitluck S."/>
            <person name="Brettin T."/>
            <person name="Bruce D."/>
            <person name="Han C."/>
            <person name="Tapia R."/>
            <person name="Gilna P."/>
            <person name="Schmutz J."/>
            <person name="Larimer F."/>
            <person name="Land M."/>
            <person name="Kyrpides N.C."/>
            <person name="Mavromatis K."/>
            <person name="Richardson P."/>
            <person name="Rohde M."/>
            <person name="Goeker M."/>
            <person name="Klenk H.P."/>
            <person name="Zhang Y."/>
            <person name="Roberts G.P."/>
            <person name="Reslewic S."/>
            <person name="Schwartz D.C."/>
        </authorList>
    </citation>
    <scope>NUCLEOTIDE SEQUENCE [LARGE SCALE GENOMIC DNA]</scope>
    <source>
        <strain>ATCC 11170 / ATH 1.1.1 / DSM 467 / LMG 4362 / NCIMB 8255 / S1</strain>
    </source>
</reference>
<reference key="3">
    <citation type="journal article" date="2000" name="Structure">
        <title>Protein-protein recognition, hydride transfer and proton pumping in the transhydrogenase complex.</title>
        <authorList>
            <person name="Buckley P.A."/>
            <person name="Jackson J.B."/>
            <person name="Schneider T."/>
            <person name="White S.A."/>
            <person name="Rice D.W."/>
            <person name="Baker P.J."/>
        </authorList>
    </citation>
    <scope>X-RAY CRYSTALLOGRAPHY (2.0 ANGSTROMS) IN COMPLEX WITH NAD</scope>
    <source>
        <strain>ATCC 11170 / ATH 1.1.1 / DSM 467 / LMG 4362 / NCIMB 8255 / S1</strain>
    </source>
</reference>
<reference key="4">
    <citation type="journal article" date="2001" name="Structure">
        <title>The crystal structure of an asymmetric complex of the two nucleotide binding components of proton-translocating transhydrogenase.</title>
        <authorList>
            <person name="Cotton N.P.J."/>
            <person name="White S.A."/>
            <person name="Peake S.J."/>
            <person name="McSweeney S."/>
            <person name="Baz Jackson J."/>
        </authorList>
    </citation>
    <scope>X-RAY CRYSTALLOGRAPHY (2.5 ANGSTROMS) IN COMPLEX WITH NAD AND PNTB</scope>
    <scope>SUBUNIT</scope>
    <scope>REGION</scope>
    <source>
        <strain>ATCC 11170 / ATH 1.1.1 / DSM 467 / LMG 4362 / NCIMB 8255 / S1</strain>
    </source>
</reference>
<reference key="5">
    <citation type="journal article" date="2002" name="Biochemistry">
        <title>Crystal structures of transhydrogenase domain I with and without bound NADH.</title>
        <authorList>
            <person name="Prasad G.S."/>
            <person name="Wahlberg M."/>
            <person name="Sridhar V."/>
            <person name="Sundaresan V."/>
            <person name="Yamaguchi M."/>
            <person name="Hatefi Y."/>
            <person name="Stout C.D."/>
        </authorList>
    </citation>
    <scope>X-RAY CRYSTALLOGRAPHY (1.81 ANGSTROMS) OF APO ENZYME</scope>
    <scope>IN COMPLEX WITH NADH</scope>
</reference>
<reference key="6">
    <citation type="journal article" date="2003" name="Biochemistry">
        <title>Glutamine 132 in the NAD(H)-binding component of proton-translocating transhydrogenase tethers the nucleotides before hydride transfer.</title>
        <authorList>
            <person name="van Boxel G.I."/>
            <person name="Quirk P.G."/>
            <person name="Cotton N.P."/>
            <person name="White S.A."/>
            <person name="Jackson J.B."/>
        </authorList>
    </citation>
    <scope>X-RAY CRYSTALLOGRAPHY (2.40 ANGSTROMS) OF MUTANT ASN-132 IN COMPLEX WITH PNTB</scope>
    <scope>CATALYTIC ACTIVITY</scope>
    <scope>NADH-BINDING KINETICS</scope>
    <scope>SUBSTRATE-NAD(P) TRANSHYDROGENASE PROTEIN COMPLEX KINETICS</scope>
    <scope>SUBUNIT</scope>
    <scope>MUTAGENESIS OF GLN-132</scope>
    <source>
        <strain>ATCC 11170 / ATH 1.1.1 / DSM 467 / LMG 4362 / NCIMB 8255 / S1</strain>
    </source>
</reference>
<reference key="7">
    <citation type="journal article" date="2003" name="J. Biol. Chem.">
        <title>Interactions between transhydrogenase and thio-nicotinamide Analogues of NAD(H) and NADP(H) underline the importance of nucleotide conformational changes in coupling to proton translocation.</title>
        <authorList>
            <person name="Singh A."/>
            <person name="Venning J.D."/>
            <person name="Quirk P.G."/>
            <person name="van Boxel G.I."/>
            <person name="Rodrigues D.J."/>
            <person name="White S.A."/>
            <person name="Jackson J.B."/>
        </authorList>
    </citation>
    <scope>X-RAY CRYSTALLOGRAPHY (2.61 ANGSTROMS) OF 1-381 IN COMPLEX WITH PNTB AND THIO-NICOTINAMIDE NUCLEOTIDE ANALOG</scope>
    <scope>CATALYTIC ACTIVITY</scope>
    <scope>SUBSTRATE ANALOG-NAD(P) TRANSHYDROGENASE PROTEIN COMPLEX KINETICS</scope>
    <source>
        <strain>ATCC 11170 / ATH 1.1.1 / DSM 467 / LMG 4362 / NCIMB 8255 / S1</strain>
    </source>
</reference>
<reference key="8">
    <citation type="journal article" date="2004" name="Biochemistry">
        <title>Active-site conformational changes associated with hydride transfer in proton-translocating transhydrogenase.</title>
        <authorList>
            <person name="Mather O.C."/>
            <person name="Singh A."/>
            <person name="van Boxel G.I."/>
            <person name="White S.A."/>
            <person name="Jackson J.B."/>
        </authorList>
    </citation>
    <scope>X-RAY CRYSTALLOGRAPHY (2.20 ANGSTROMS) IN COMPLEXES WITH NAD; NADH; ADP-RIBOSE AND PNTB</scope>
    <source>
        <strain>ATCC 11170 / ATH 1.1.1 / DSM 467 / LMG 4362 / NCIMB 8255 / S1</strain>
    </source>
</reference>
<reference key="9">
    <citation type="journal article" date="2005" name="J. Mol. Biol.">
        <title>Conformational diversity in NAD(H) and interacting transhydrogenase nicotinamide nucleotide binding domains.</title>
        <authorList>
            <person name="Sundaresan V."/>
            <person name="Chartron J."/>
            <person name="Yamaguchi M."/>
            <person name="Stout C.D."/>
        </authorList>
    </citation>
    <scope>X-RAY CRYSTALLOGRAPHY (3.10 ANGSTROMS) IN COMPLEX WITH NAD AND PNTB</scope>
</reference>
<reference key="10">
    <citation type="journal article" date="2006" name="J. Biol. Chem.">
        <title>The role of invariant amino acid residues at the hydride transfer site of proton-translocating transhydrogenase.</title>
        <authorList>
            <person name="Brondijk T.H."/>
            <person name="van Boxel G.I."/>
            <person name="Mather O.C."/>
            <person name="Quirk P.G."/>
            <person name="White S.A."/>
            <person name="Jackson J.B."/>
        </authorList>
    </citation>
    <scope>X-RAY CRYSTALLOGRAPHY (2.30 ANGSTROMS) OF MUTANTS ALA-127; ASN-135 AND ALA-138 IN COMPLEXES WITH NAD; NADH AND PNTB</scope>
    <scope>CATALYTIC ACTIVITY</scope>
    <scope>SUBSTRATE-NAD(P) TRANSHYDROGENASE PROTEIN COMPLEX KINETICS</scope>
    <scope>NADH-BINDING</scope>
    <scope>MUTAGENESIS OF ARG-127; ASP-135 AND SER-138</scope>
    <source>
        <strain>ATCC 11170 / ATH 1.1.1 / DSM 467 / LMG 4362 / NCIMB 8255 / S1</strain>
    </source>
</reference>
<reference key="11">
    <citation type="journal article" date="2007" name="Biochemistry">
        <title>Structures of the dI2dIII1 complex of proton-translocating transhydrogenase with bound, inactive analogues of NADH and NADPH reveal active site geometries.</title>
        <authorList>
            <person name="Bhakta T."/>
            <person name="Whitehead S.J."/>
            <person name="Snaith J.S."/>
            <person name="Dafforn T.R."/>
            <person name="Wilkie J."/>
            <person name="Rajesh S."/>
            <person name="White S.A."/>
            <person name="Jackson J.B."/>
        </authorList>
    </citation>
    <scope>X-RAY CRYSTALLOGRAPHY (2.32 ANGSTROMS) IN COMPLEXES WITH NAD; INACTIVE NADH ANALOG AND PNTB</scope>
    <scope>CATALYTIC ACTIVITY</scope>
    <scope>MOLECULAR DYNAMICS SIMULATIONS AND TRANSITION STATE MODELING OF NAD(P) TRANSHYDROGENASE PROTEIN COMPLEX</scope>
    <source>
        <strain>ATCC 11170 / ATH 1.1.1 / DSM 467 / LMG 4362 / NCIMB 8255 / S1</strain>
    </source>
</reference>
<name>PNTAA_RHORT</name>
<accession>Q2RSB2</accession>
<accession>Q60164</accession>
<feature type="chain" id="PRO_0000231663" description="NAD(P) transhydrogenase subunit alpha part 1">
    <location>
        <begin position="1"/>
        <end position="384"/>
    </location>
</feature>
<feature type="region of interest" description="RQD loop; involved in interaction with PntB">
    <location>
        <begin position="126"/>
        <end position="136"/>
    </location>
</feature>
<feature type="binding site" evidence="2 3 6">
    <location>
        <begin position="127"/>
        <end position="129"/>
    </location>
    <ligand>
        <name>NAD(+)</name>
        <dbReference type="ChEBI" id="CHEBI:57540"/>
    </ligand>
</feature>
<feature type="binding site" evidence="2 3 6">
    <location>
        <begin position="132"/>
        <end position="135"/>
    </location>
    <ligand>
        <name>NAD(+)</name>
        <dbReference type="ChEBI" id="CHEBI:57540"/>
    </ligand>
</feature>
<feature type="binding site" evidence="2 3 6">
    <location>
        <begin position="180"/>
        <end position="182"/>
    </location>
    <ligand>
        <name>NAD(+)</name>
        <dbReference type="ChEBI" id="CHEBI:57540"/>
    </ligand>
</feature>
<feature type="binding site" evidence="2 3 6">
    <location>
        <begin position="202"/>
        <end position="204"/>
    </location>
    <ligand>
        <name>NAD(+)</name>
        <dbReference type="ChEBI" id="CHEBI:57540"/>
    </ligand>
</feature>
<feature type="binding site" evidence="2 3 6">
    <location>
        <position position="234"/>
    </location>
    <ligand>
        <name>NAD(+)</name>
        <dbReference type="ChEBI" id="CHEBI:57540"/>
    </ligand>
</feature>
<feature type="binding site" evidence="2 3 6">
    <location>
        <position position="247"/>
    </location>
    <ligand>
        <name>NAD(+)</name>
        <dbReference type="ChEBI" id="CHEBI:57540"/>
    </ligand>
</feature>
<feature type="binding site" evidence="2 3 6">
    <location>
        <position position="266"/>
    </location>
    <ligand>
        <name>NAD(+)</name>
        <dbReference type="ChEBI" id="CHEBI:57540"/>
    </ligand>
</feature>
<feature type="mutagenesis site" description="No effect on interaction with PntB, but hydride transfer inhibited. Much weaker binding to NADH." evidence="7">
    <original>R</original>
    <variation>A</variation>
    <variation>M</variation>
    <location>
        <position position="127"/>
    </location>
</feature>
<feature type="mutagenesis site" description="No effect on interaction with PntB, but hydride transfer strongly inhibited. No effect on NADH binding affinity on its own, but differences in NADH binding properties in complex with PntB." evidence="4">
    <original>Q</original>
    <variation>N</variation>
    <location>
        <position position="132"/>
    </location>
</feature>
<feature type="mutagenesis site" description="No effect on interaction with PntB, but hydride transfer strongly inhibited. No effect on the binding affinity to NADH." evidence="7">
    <original>D</original>
    <variation>N</variation>
    <location>
        <position position="135"/>
    </location>
</feature>
<feature type="mutagenesis site" description="No effect on interaction with PntB, but hydride transfer strongly inhibited. No effect on the binding affinity to NADH." evidence="7">
    <original>S</original>
    <variation>A</variation>
    <location>
        <position position="138"/>
    </location>
</feature>
<feature type="strand" evidence="10">
    <location>
        <begin position="2"/>
        <end position="5"/>
    </location>
</feature>
<feature type="strand" evidence="12">
    <location>
        <begin position="10"/>
        <end position="12"/>
    </location>
</feature>
<feature type="helix" evidence="10">
    <location>
        <begin position="20"/>
        <end position="28"/>
    </location>
</feature>
<feature type="strand" evidence="10">
    <location>
        <begin position="32"/>
        <end position="36"/>
    </location>
</feature>
<feature type="turn" evidence="10">
    <location>
        <begin position="37"/>
        <end position="40"/>
    </location>
</feature>
<feature type="helix" evidence="10">
    <location>
        <begin position="41"/>
        <end position="43"/>
    </location>
</feature>
<feature type="helix" evidence="10">
    <location>
        <begin position="47"/>
        <end position="52"/>
    </location>
</feature>
<feature type="strand" evidence="10">
    <location>
        <begin position="56"/>
        <end position="60"/>
    </location>
</feature>
<feature type="helix" evidence="10">
    <location>
        <begin position="61"/>
        <end position="65"/>
    </location>
</feature>
<feature type="strand" evidence="10">
    <location>
        <begin position="69"/>
        <end position="75"/>
    </location>
</feature>
<feature type="helix" evidence="10">
    <location>
        <begin position="80"/>
        <end position="82"/>
    </location>
</feature>
<feature type="helix" evidence="10">
    <location>
        <begin position="86"/>
        <end position="89"/>
    </location>
</feature>
<feature type="strand" evidence="10">
    <location>
        <begin position="95"/>
        <end position="99"/>
    </location>
</feature>
<feature type="helix" evidence="10">
    <location>
        <begin position="102"/>
        <end position="104"/>
    </location>
</feature>
<feature type="helix" evidence="10">
    <location>
        <begin position="106"/>
        <end position="114"/>
    </location>
</feature>
<feature type="strand" evidence="10">
    <location>
        <begin position="118"/>
        <end position="121"/>
    </location>
</feature>
<feature type="helix" evidence="10">
    <location>
        <begin position="122"/>
        <end position="124"/>
    </location>
</feature>
<feature type="helix" evidence="10">
    <location>
        <begin position="129"/>
        <end position="134"/>
    </location>
</feature>
<feature type="helix" evidence="10">
    <location>
        <begin position="136"/>
        <end position="155"/>
    </location>
</feature>
<feature type="strand" evidence="10">
    <location>
        <begin position="163"/>
        <end position="165"/>
    </location>
</feature>
<feature type="strand" evidence="10">
    <location>
        <begin position="168"/>
        <end position="170"/>
    </location>
</feature>
<feature type="strand" evidence="10">
    <location>
        <begin position="174"/>
        <end position="178"/>
    </location>
</feature>
<feature type="helix" evidence="10">
    <location>
        <begin position="182"/>
        <end position="193"/>
    </location>
</feature>
<feature type="strand" evidence="10">
    <location>
        <begin position="197"/>
        <end position="201"/>
    </location>
</feature>
<feature type="helix" evidence="10">
    <location>
        <begin position="208"/>
        <end position="213"/>
    </location>
</feature>
<feature type="turn" evidence="14">
    <location>
        <begin position="223"/>
        <end position="228"/>
    </location>
</feature>
<feature type="strand" evidence="11">
    <location>
        <begin position="233"/>
        <end position="235"/>
    </location>
</feature>
<feature type="helix" evidence="10">
    <location>
        <begin position="247"/>
        <end position="255"/>
    </location>
</feature>
<feature type="strand" evidence="10">
    <location>
        <begin position="259"/>
        <end position="263"/>
    </location>
</feature>
<feature type="strand" evidence="11">
    <location>
        <begin position="268"/>
        <end position="270"/>
    </location>
</feature>
<feature type="helix" evidence="10">
    <location>
        <begin position="278"/>
        <end position="281"/>
    </location>
</feature>
<feature type="strand" evidence="10">
    <location>
        <begin position="289"/>
        <end position="292"/>
    </location>
</feature>
<feature type="helix" evidence="10">
    <location>
        <begin position="295"/>
        <end position="297"/>
    </location>
</feature>
<feature type="strand" evidence="10">
    <location>
        <begin position="309"/>
        <end position="312"/>
    </location>
</feature>
<feature type="strand" evidence="10">
    <location>
        <begin position="315"/>
        <end position="318"/>
    </location>
</feature>
<feature type="helix" evidence="10">
    <location>
        <begin position="323"/>
        <end position="327"/>
    </location>
</feature>
<feature type="helix" evidence="10">
    <location>
        <begin position="328"/>
        <end position="343"/>
    </location>
</feature>
<feature type="helix" evidence="10">
    <location>
        <begin position="344"/>
        <end position="346"/>
    </location>
</feature>
<feature type="turn" evidence="10">
    <location>
        <begin position="349"/>
        <end position="352"/>
    </location>
</feature>
<feature type="strand" evidence="13">
    <location>
        <begin position="358"/>
        <end position="360"/>
    </location>
</feature>
<feature type="helix" evidence="10">
    <location>
        <begin position="361"/>
        <end position="366"/>
    </location>
</feature>
<feature type="strand" evidence="10">
    <location>
        <begin position="367"/>
        <end position="370"/>
    </location>
</feature>
<feature type="strand" evidence="15">
    <location>
        <begin position="371"/>
        <end position="374"/>
    </location>
</feature>
<feature type="strand" evidence="10">
    <location>
        <begin position="379"/>
        <end position="381"/>
    </location>
</feature>
<comment type="function">
    <text evidence="1">The transhydrogenation between NADH and NADP is coupled to respiration and ATP hydrolysis and functions as a proton pump across the membrane.</text>
</comment>
<comment type="catalytic activity">
    <reaction evidence="4 5 7 8">
        <text>NAD(+) + NADPH + H(+)(in) = NADH + NADP(+) + H(+)(out)</text>
        <dbReference type="Rhea" id="RHEA:47992"/>
        <dbReference type="ChEBI" id="CHEBI:15378"/>
        <dbReference type="ChEBI" id="CHEBI:57540"/>
        <dbReference type="ChEBI" id="CHEBI:57783"/>
        <dbReference type="ChEBI" id="CHEBI:57945"/>
        <dbReference type="ChEBI" id="CHEBI:58349"/>
        <dbReference type="EC" id="7.1.1.1"/>
    </reaction>
</comment>
<comment type="subunit">
    <text evidence="2 3 4 5 6">Heterotrimer of two alpha chains and a beta (PntB) chain; in Rhodospirillum, the alpha chain is made of two subunits (PntAA and PntAB) and forms a dimer.</text>
</comment>
<comment type="similarity">
    <text evidence="9">Belongs to the AlaDH/PNT family.</text>
</comment>
<protein>
    <recommendedName>
        <fullName>NAD(P) transhydrogenase subunit alpha part 1</fullName>
        <ecNumber evidence="4 5 7 8">7.1.1.1</ecNumber>
    </recommendedName>
    <alternativeName>
        <fullName>Nicotinamide nucleotide transhydrogenase subunit alpha 1</fullName>
    </alternativeName>
    <alternativeName>
        <fullName>Proton-translocating transhydrogenase component 1</fullName>
    </alternativeName>
    <alternativeName>
        <fullName>Pyridine nucleotide transhydrogenase subunit alpha 1</fullName>
    </alternativeName>
    <alternativeName>
        <fullName>dI</fullName>
    </alternativeName>
</protein>
<evidence type="ECO:0000250" key="1">
    <source>
        <dbReference type="UniProtKB" id="P07001"/>
    </source>
</evidence>
<evidence type="ECO:0000269" key="2">
    <source>
    </source>
</evidence>
<evidence type="ECO:0000269" key="3">
    <source>
    </source>
</evidence>
<evidence type="ECO:0000269" key="4">
    <source>
    </source>
</evidence>
<evidence type="ECO:0000269" key="5">
    <source>
    </source>
</evidence>
<evidence type="ECO:0000269" key="6">
    <source>
    </source>
</evidence>
<evidence type="ECO:0000269" key="7">
    <source>
    </source>
</evidence>
<evidence type="ECO:0000269" key="8">
    <source>
    </source>
</evidence>
<evidence type="ECO:0000305" key="9"/>
<evidence type="ECO:0007829" key="10">
    <source>
        <dbReference type="PDB" id="1L7D"/>
    </source>
</evidence>
<evidence type="ECO:0007829" key="11">
    <source>
        <dbReference type="PDB" id="1L7E"/>
    </source>
</evidence>
<evidence type="ECO:0007829" key="12">
    <source>
        <dbReference type="PDB" id="1PTJ"/>
    </source>
</evidence>
<evidence type="ECO:0007829" key="13">
    <source>
        <dbReference type="PDB" id="1U28"/>
    </source>
</evidence>
<evidence type="ECO:0007829" key="14">
    <source>
        <dbReference type="PDB" id="1U2G"/>
    </source>
</evidence>
<evidence type="ECO:0007829" key="15">
    <source>
        <dbReference type="PDB" id="2OO5"/>
    </source>
</evidence>
<keyword id="KW-0002">3D-structure</keyword>
<keyword id="KW-0520">NAD</keyword>
<keyword id="KW-0521">NADP</keyword>
<keyword id="KW-0547">Nucleotide-binding</keyword>
<keyword id="KW-1185">Reference proteome</keyword>
<keyword id="KW-1278">Translocase</keyword>